<organism>
    <name type="scientific">Chlamydia trachomatis serovar L2 (strain ATCC VR-902B / DSM 19102 / 434/Bu)</name>
    <dbReference type="NCBI Taxonomy" id="471472"/>
    <lineage>
        <taxon>Bacteria</taxon>
        <taxon>Pseudomonadati</taxon>
        <taxon>Chlamydiota</taxon>
        <taxon>Chlamydiia</taxon>
        <taxon>Chlamydiales</taxon>
        <taxon>Chlamydiaceae</taxon>
        <taxon>Chlamydia/Chlamydophila group</taxon>
        <taxon>Chlamydia</taxon>
    </lineage>
</organism>
<gene>
    <name evidence="1" type="primary">rnpA</name>
    <name type="ordered locus">CTL0153</name>
</gene>
<sequence length="120" mass="13761">MSRLTLPKNARLLKRKQFVYVQRNGRCCRADQVTLRVVPSRHSNTSKVGITVSKKFGKAHQRNRFKRIVREAFRHVRPNLPGCQVVISPRGNSQPDFLKLSEELLQRIPEALPLASSSRC</sequence>
<proteinExistence type="inferred from homology"/>
<reference key="1">
    <citation type="journal article" date="2008" name="Genome Res.">
        <title>Chlamydia trachomatis: genome sequence analysis of lymphogranuloma venereum isolates.</title>
        <authorList>
            <person name="Thomson N.R."/>
            <person name="Holden M.T.G."/>
            <person name="Carder C."/>
            <person name="Lennard N."/>
            <person name="Lockey S.J."/>
            <person name="Marsh P."/>
            <person name="Skipp P."/>
            <person name="O'Connor C.D."/>
            <person name="Goodhead I."/>
            <person name="Norbertzcak H."/>
            <person name="Harris B."/>
            <person name="Ormond D."/>
            <person name="Rance R."/>
            <person name="Quail M.A."/>
            <person name="Parkhill J."/>
            <person name="Stephens R.S."/>
            <person name="Clarke I.N."/>
        </authorList>
    </citation>
    <scope>NUCLEOTIDE SEQUENCE [LARGE SCALE GENOMIC DNA]</scope>
    <source>
        <strain>ATCC VR-902B / DSM 19102 / 434/Bu</strain>
    </source>
</reference>
<evidence type="ECO:0000255" key="1">
    <source>
        <dbReference type="HAMAP-Rule" id="MF_00227"/>
    </source>
</evidence>
<name>RNPA_CHLT2</name>
<keyword id="KW-0255">Endonuclease</keyword>
<keyword id="KW-0378">Hydrolase</keyword>
<keyword id="KW-0540">Nuclease</keyword>
<keyword id="KW-0694">RNA-binding</keyword>
<keyword id="KW-0819">tRNA processing</keyword>
<protein>
    <recommendedName>
        <fullName evidence="1">Ribonuclease P protein component</fullName>
        <shortName evidence="1">RNase P protein</shortName>
        <shortName evidence="1">RNaseP protein</shortName>
        <ecNumber evidence="1">3.1.26.5</ecNumber>
    </recommendedName>
    <alternativeName>
        <fullName evidence="1">Protein C5</fullName>
    </alternativeName>
</protein>
<feature type="chain" id="PRO_1000100348" description="Ribonuclease P protein component">
    <location>
        <begin position="1"/>
        <end position="120"/>
    </location>
</feature>
<accession>B0B910</accession>
<dbReference type="EC" id="3.1.26.5" evidence="1"/>
<dbReference type="EMBL" id="AM884176">
    <property type="protein sequence ID" value="CAP03597.1"/>
    <property type="molecule type" value="Genomic_DNA"/>
</dbReference>
<dbReference type="RefSeq" id="WP_009873403.1">
    <property type="nucleotide sequence ID" value="NC_010287.1"/>
</dbReference>
<dbReference type="RefSeq" id="YP_001654244.1">
    <property type="nucleotide sequence ID" value="NC_010287.1"/>
</dbReference>
<dbReference type="SMR" id="B0B910"/>
<dbReference type="KEGG" id="ctb:CTL0153"/>
<dbReference type="PATRIC" id="fig|471472.4.peg.165"/>
<dbReference type="HOGENOM" id="CLU_117179_9_2_0"/>
<dbReference type="Proteomes" id="UP001154402">
    <property type="component" value="Chromosome"/>
</dbReference>
<dbReference type="GO" id="GO:0030677">
    <property type="term" value="C:ribonuclease P complex"/>
    <property type="evidence" value="ECO:0007669"/>
    <property type="project" value="TreeGrafter"/>
</dbReference>
<dbReference type="GO" id="GO:0042781">
    <property type="term" value="F:3'-tRNA processing endoribonuclease activity"/>
    <property type="evidence" value="ECO:0007669"/>
    <property type="project" value="TreeGrafter"/>
</dbReference>
<dbReference type="GO" id="GO:0004526">
    <property type="term" value="F:ribonuclease P activity"/>
    <property type="evidence" value="ECO:0007669"/>
    <property type="project" value="UniProtKB-UniRule"/>
</dbReference>
<dbReference type="GO" id="GO:0000049">
    <property type="term" value="F:tRNA binding"/>
    <property type="evidence" value="ECO:0007669"/>
    <property type="project" value="UniProtKB-UniRule"/>
</dbReference>
<dbReference type="GO" id="GO:0001682">
    <property type="term" value="P:tRNA 5'-leader removal"/>
    <property type="evidence" value="ECO:0007669"/>
    <property type="project" value="UniProtKB-UniRule"/>
</dbReference>
<dbReference type="FunFam" id="3.30.230.10:FF:000142">
    <property type="entry name" value="Ribonuclease P protein component"/>
    <property type="match status" value="1"/>
</dbReference>
<dbReference type="Gene3D" id="3.30.230.10">
    <property type="match status" value="1"/>
</dbReference>
<dbReference type="HAMAP" id="MF_00227">
    <property type="entry name" value="RNase_P"/>
    <property type="match status" value="1"/>
</dbReference>
<dbReference type="InterPro" id="IPR020568">
    <property type="entry name" value="Ribosomal_Su5_D2-typ_SF"/>
</dbReference>
<dbReference type="InterPro" id="IPR014721">
    <property type="entry name" value="Ribsml_uS5_D2-typ_fold_subgr"/>
</dbReference>
<dbReference type="InterPro" id="IPR000100">
    <property type="entry name" value="RNase_P"/>
</dbReference>
<dbReference type="InterPro" id="IPR020539">
    <property type="entry name" value="RNase_P_CS"/>
</dbReference>
<dbReference type="NCBIfam" id="TIGR00188">
    <property type="entry name" value="rnpA"/>
    <property type="match status" value="1"/>
</dbReference>
<dbReference type="PANTHER" id="PTHR33992">
    <property type="entry name" value="RIBONUCLEASE P PROTEIN COMPONENT"/>
    <property type="match status" value="1"/>
</dbReference>
<dbReference type="PANTHER" id="PTHR33992:SF1">
    <property type="entry name" value="RIBONUCLEASE P PROTEIN COMPONENT"/>
    <property type="match status" value="1"/>
</dbReference>
<dbReference type="Pfam" id="PF00825">
    <property type="entry name" value="Ribonuclease_P"/>
    <property type="match status" value="1"/>
</dbReference>
<dbReference type="SUPFAM" id="SSF54211">
    <property type="entry name" value="Ribosomal protein S5 domain 2-like"/>
    <property type="match status" value="1"/>
</dbReference>
<dbReference type="PROSITE" id="PS00648">
    <property type="entry name" value="RIBONUCLEASE_P"/>
    <property type="match status" value="1"/>
</dbReference>
<comment type="function">
    <text evidence="1">RNaseP catalyzes the removal of the 5'-leader sequence from pre-tRNA to produce the mature 5'-terminus. It can also cleave other RNA substrates such as 4.5S RNA. The protein component plays an auxiliary but essential role in vivo by binding to the 5'-leader sequence and broadening the substrate specificity of the ribozyme.</text>
</comment>
<comment type="catalytic activity">
    <reaction evidence="1">
        <text>Endonucleolytic cleavage of RNA, removing 5'-extranucleotides from tRNA precursor.</text>
        <dbReference type="EC" id="3.1.26.5"/>
    </reaction>
</comment>
<comment type="subunit">
    <text evidence="1">Consists of a catalytic RNA component (M1 or rnpB) and a protein subunit.</text>
</comment>
<comment type="similarity">
    <text evidence="1">Belongs to the RnpA family.</text>
</comment>